<feature type="chain" id="PRO_1000124231" description="Protease HtpX homolog">
    <location>
        <begin position="1"/>
        <end position="304"/>
    </location>
</feature>
<feature type="transmembrane region" description="Helical" evidence="1">
    <location>
        <begin position="14"/>
        <end position="34"/>
    </location>
</feature>
<feature type="transmembrane region" description="Helical" evidence="1">
    <location>
        <begin position="39"/>
        <end position="59"/>
    </location>
</feature>
<feature type="transmembrane region" description="Helical" evidence="1">
    <location>
        <begin position="159"/>
        <end position="179"/>
    </location>
</feature>
<feature type="transmembrane region" description="Helical" evidence="1">
    <location>
        <begin position="202"/>
        <end position="222"/>
    </location>
</feature>
<feature type="active site" evidence="1">
    <location>
        <position position="145"/>
    </location>
</feature>
<feature type="binding site" evidence="1">
    <location>
        <position position="144"/>
    </location>
    <ligand>
        <name>Zn(2+)</name>
        <dbReference type="ChEBI" id="CHEBI:29105"/>
        <note>catalytic</note>
    </ligand>
</feature>
<feature type="binding site" evidence="1">
    <location>
        <position position="148"/>
    </location>
    <ligand>
        <name>Zn(2+)</name>
        <dbReference type="ChEBI" id="CHEBI:29105"/>
        <note>catalytic</note>
    </ligand>
</feature>
<feature type="binding site" evidence="1">
    <location>
        <position position="231"/>
    </location>
    <ligand>
        <name>Zn(2+)</name>
        <dbReference type="ChEBI" id="CHEBI:29105"/>
        <note>catalytic</note>
    </ligand>
</feature>
<accession>B8DEH2</accession>
<reference key="1">
    <citation type="journal article" date="2011" name="J. Bacteriol.">
        <title>Genome sequence of lineage III Listeria monocytogenes strain HCC23.</title>
        <authorList>
            <person name="Steele C.L."/>
            <person name="Donaldson J.R."/>
            <person name="Paul D."/>
            <person name="Banes M.M."/>
            <person name="Arick T."/>
            <person name="Bridges S.M."/>
            <person name="Lawrence M.L."/>
        </authorList>
    </citation>
    <scope>NUCLEOTIDE SEQUENCE [LARGE SCALE GENOMIC DNA]</scope>
    <source>
        <strain>HCC23</strain>
    </source>
</reference>
<sequence>MLFEQIAANKRKTVFIILGFFIFVLMVGAAIGIIVWNNYLNGLILAAVIGAFYILIMVMSSSSVVMAMNHAKEVTSKEQAPVLWDTVESMAMVAGIPMPKVYIVEDPSPNAFATGISPEKGAVAVTRGLLNKLERYELEGVIAHEISHIRNYDIRLSTIAIALVAVIAILSDIAMRMIFWGSITGGRNSRKSDNNNGGGAQAIIYIVALIFVILAPIIATAIQFALSRNREYLADASAVELTRNPDGLIQALQKISGDSKKMEEVSASSESIYFSSPLKSKKNKPGLFDSHPPISSRIERLENM</sequence>
<proteinExistence type="inferred from homology"/>
<name>HTPX_LISMH</name>
<comment type="cofactor">
    <cofactor evidence="1">
        <name>Zn(2+)</name>
        <dbReference type="ChEBI" id="CHEBI:29105"/>
    </cofactor>
    <text evidence="1">Binds 1 zinc ion per subunit.</text>
</comment>
<comment type="subcellular location">
    <subcellularLocation>
        <location evidence="1">Cell membrane</location>
        <topology evidence="1">Multi-pass membrane protein</topology>
    </subcellularLocation>
</comment>
<comment type="similarity">
    <text evidence="1">Belongs to the peptidase M48B family.</text>
</comment>
<keyword id="KW-1003">Cell membrane</keyword>
<keyword id="KW-0378">Hydrolase</keyword>
<keyword id="KW-0472">Membrane</keyword>
<keyword id="KW-0479">Metal-binding</keyword>
<keyword id="KW-0482">Metalloprotease</keyword>
<keyword id="KW-0645">Protease</keyword>
<keyword id="KW-0812">Transmembrane</keyword>
<keyword id="KW-1133">Transmembrane helix</keyword>
<keyword id="KW-0862">Zinc</keyword>
<organism>
    <name type="scientific">Listeria monocytogenes serotype 4a (strain HCC23)</name>
    <dbReference type="NCBI Taxonomy" id="552536"/>
    <lineage>
        <taxon>Bacteria</taxon>
        <taxon>Bacillati</taxon>
        <taxon>Bacillota</taxon>
        <taxon>Bacilli</taxon>
        <taxon>Bacillales</taxon>
        <taxon>Listeriaceae</taxon>
        <taxon>Listeria</taxon>
    </lineage>
</organism>
<dbReference type="EC" id="3.4.24.-" evidence="1"/>
<dbReference type="EMBL" id="CP001175">
    <property type="protein sequence ID" value="ACK40001.1"/>
    <property type="molecule type" value="Genomic_DNA"/>
</dbReference>
<dbReference type="RefSeq" id="WP_012581626.1">
    <property type="nucleotide sequence ID" value="NC_011660.1"/>
</dbReference>
<dbReference type="KEGG" id="lmh:LMHCC_1659"/>
<dbReference type="HOGENOM" id="CLU_042266_2_1_9"/>
<dbReference type="GO" id="GO:0005886">
    <property type="term" value="C:plasma membrane"/>
    <property type="evidence" value="ECO:0007669"/>
    <property type="project" value="UniProtKB-SubCell"/>
</dbReference>
<dbReference type="GO" id="GO:0004222">
    <property type="term" value="F:metalloendopeptidase activity"/>
    <property type="evidence" value="ECO:0007669"/>
    <property type="project" value="UniProtKB-UniRule"/>
</dbReference>
<dbReference type="GO" id="GO:0008270">
    <property type="term" value="F:zinc ion binding"/>
    <property type="evidence" value="ECO:0007669"/>
    <property type="project" value="UniProtKB-UniRule"/>
</dbReference>
<dbReference type="GO" id="GO:0006508">
    <property type="term" value="P:proteolysis"/>
    <property type="evidence" value="ECO:0007669"/>
    <property type="project" value="UniProtKB-KW"/>
</dbReference>
<dbReference type="CDD" id="cd07340">
    <property type="entry name" value="M48B_Htpx_like"/>
    <property type="match status" value="1"/>
</dbReference>
<dbReference type="Gene3D" id="3.30.2010.10">
    <property type="entry name" value="Metalloproteases ('zincins'), catalytic domain"/>
    <property type="match status" value="1"/>
</dbReference>
<dbReference type="HAMAP" id="MF_00188">
    <property type="entry name" value="Pept_M48_protease_HtpX"/>
    <property type="match status" value="1"/>
</dbReference>
<dbReference type="InterPro" id="IPR050083">
    <property type="entry name" value="HtpX_protease"/>
</dbReference>
<dbReference type="InterPro" id="IPR022919">
    <property type="entry name" value="Pept_M48_protease_HtpX"/>
</dbReference>
<dbReference type="InterPro" id="IPR001915">
    <property type="entry name" value="Peptidase_M48"/>
</dbReference>
<dbReference type="NCBIfam" id="NF003425">
    <property type="entry name" value="PRK04897.1"/>
    <property type="match status" value="1"/>
</dbReference>
<dbReference type="PANTHER" id="PTHR43221">
    <property type="entry name" value="PROTEASE HTPX"/>
    <property type="match status" value="1"/>
</dbReference>
<dbReference type="PANTHER" id="PTHR43221:SF1">
    <property type="entry name" value="PROTEASE HTPX"/>
    <property type="match status" value="1"/>
</dbReference>
<dbReference type="Pfam" id="PF01435">
    <property type="entry name" value="Peptidase_M48"/>
    <property type="match status" value="1"/>
</dbReference>
<protein>
    <recommendedName>
        <fullName evidence="1">Protease HtpX homolog</fullName>
        <ecNumber evidence="1">3.4.24.-</ecNumber>
    </recommendedName>
</protein>
<evidence type="ECO:0000255" key="1">
    <source>
        <dbReference type="HAMAP-Rule" id="MF_00188"/>
    </source>
</evidence>
<gene>
    <name evidence="1" type="primary">htpX</name>
    <name type="ordered locus">LMHCC_1659</name>
</gene>